<comment type="function">
    <text evidence="1">Catalyzes the ATP-dependent phosphorylation of N-acetyl-L-glutamate.</text>
</comment>
<comment type="catalytic activity">
    <reaction evidence="1">
        <text>N-acetyl-L-glutamate + ATP = N-acetyl-L-glutamyl 5-phosphate + ADP</text>
        <dbReference type="Rhea" id="RHEA:14629"/>
        <dbReference type="ChEBI" id="CHEBI:30616"/>
        <dbReference type="ChEBI" id="CHEBI:44337"/>
        <dbReference type="ChEBI" id="CHEBI:57936"/>
        <dbReference type="ChEBI" id="CHEBI:456216"/>
        <dbReference type="EC" id="2.7.2.8"/>
    </reaction>
</comment>
<comment type="pathway">
    <text evidence="1">Amino-acid biosynthesis; L-arginine biosynthesis; N(2)-acetyl-L-ornithine from L-glutamate: step 2/4.</text>
</comment>
<comment type="subcellular location">
    <subcellularLocation>
        <location evidence="1">Cytoplasm</location>
    </subcellularLocation>
</comment>
<comment type="similarity">
    <text evidence="1">Belongs to the acetylglutamate kinase family. ArgB subfamily.</text>
</comment>
<organism>
    <name type="scientific">Mycobacterium ulcerans (strain Agy99)</name>
    <dbReference type="NCBI Taxonomy" id="362242"/>
    <lineage>
        <taxon>Bacteria</taxon>
        <taxon>Bacillati</taxon>
        <taxon>Actinomycetota</taxon>
        <taxon>Actinomycetes</taxon>
        <taxon>Mycobacteriales</taxon>
        <taxon>Mycobacteriaceae</taxon>
        <taxon>Mycobacterium</taxon>
        <taxon>Mycobacterium ulcerans group</taxon>
    </lineage>
</organism>
<name>ARGB_MYCUA</name>
<reference key="1">
    <citation type="journal article" date="2007" name="Genome Res.">
        <title>Reductive evolution and niche adaptation inferred from the genome of Mycobacterium ulcerans, the causative agent of Buruli ulcer.</title>
        <authorList>
            <person name="Stinear T.P."/>
            <person name="Seemann T."/>
            <person name="Pidot S."/>
            <person name="Frigui W."/>
            <person name="Reysset G."/>
            <person name="Garnier T."/>
            <person name="Meurice G."/>
            <person name="Simon D."/>
            <person name="Bouchier C."/>
            <person name="Ma L."/>
            <person name="Tichit M."/>
            <person name="Porter J.L."/>
            <person name="Ryan J."/>
            <person name="Johnson P.D.R."/>
            <person name="Davies J.K."/>
            <person name="Jenkin G.A."/>
            <person name="Small P.L.C."/>
            <person name="Jones L.M."/>
            <person name="Tekaia F."/>
            <person name="Laval F."/>
            <person name="Daffe M."/>
            <person name="Parkhill J."/>
            <person name="Cole S.T."/>
        </authorList>
    </citation>
    <scope>NUCLEOTIDE SEQUENCE [LARGE SCALE GENOMIC DNA]</scope>
    <source>
        <strain>Agy99</strain>
    </source>
</reference>
<gene>
    <name evidence="1" type="primary">argB</name>
    <name type="ordered locus">MUL_1646</name>
</gene>
<feature type="chain" id="PRO_0000335648" description="Acetylglutamate kinase">
    <location>
        <begin position="1"/>
        <end position="293"/>
    </location>
</feature>
<feature type="binding site" evidence="1">
    <location>
        <begin position="68"/>
        <end position="69"/>
    </location>
    <ligand>
        <name>substrate</name>
    </ligand>
</feature>
<feature type="binding site" evidence="1">
    <location>
        <position position="90"/>
    </location>
    <ligand>
        <name>substrate</name>
    </ligand>
</feature>
<feature type="binding site" evidence="1">
    <location>
        <position position="189"/>
    </location>
    <ligand>
        <name>substrate</name>
    </ligand>
</feature>
<feature type="site" description="Transition state stabilizer" evidence="1">
    <location>
        <position position="33"/>
    </location>
</feature>
<feature type="site" description="Transition state stabilizer" evidence="1">
    <location>
        <position position="250"/>
    </location>
</feature>
<proteinExistence type="inferred from homology"/>
<accession>A0PP75</accession>
<protein>
    <recommendedName>
        <fullName evidence="1">Acetylglutamate kinase</fullName>
        <ecNumber evidence="1">2.7.2.8</ecNumber>
    </recommendedName>
    <alternativeName>
        <fullName evidence="1">N-acetyl-L-glutamate 5-phosphotransferase</fullName>
    </alternativeName>
    <alternativeName>
        <fullName evidence="1">NAG kinase</fullName>
        <shortName evidence="1">NAGK</shortName>
    </alternativeName>
</protein>
<dbReference type="EC" id="2.7.2.8" evidence="1"/>
<dbReference type="EMBL" id="CP000325">
    <property type="protein sequence ID" value="ABL04144.1"/>
    <property type="molecule type" value="Genomic_DNA"/>
</dbReference>
<dbReference type="RefSeq" id="WP_011739764.1">
    <property type="nucleotide sequence ID" value="NC_008611.1"/>
</dbReference>
<dbReference type="SMR" id="A0PP75"/>
<dbReference type="KEGG" id="mul:MUL_1646"/>
<dbReference type="eggNOG" id="COG0548">
    <property type="taxonomic scope" value="Bacteria"/>
</dbReference>
<dbReference type="HOGENOM" id="CLU_053680_0_0_11"/>
<dbReference type="UniPathway" id="UPA00068">
    <property type="reaction ID" value="UER00107"/>
</dbReference>
<dbReference type="Proteomes" id="UP000000765">
    <property type="component" value="Chromosome"/>
</dbReference>
<dbReference type="GO" id="GO:0005737">
    <property type="term" value="C:cytoplasm"/>
    <property type="evidence" value="ECO:0007669"/>
    <property type="project" value="UniProtKB-SubCell"/>
</dbReference>
<dbReference type="GO" id="GO:0003991">
    <property type="term" value="F:acetylglutamate kinase activity"/>
    <property type="evidence" value="ECO:0007669"/>
    <property type="project" value="UniProtKB-UniRule"/>
</dbReference>
<dbReference type="GO" id="GO:0005524">
    <property type="term" value="F:ATP binding"/>
    <property type="evidence" value="ECO:0007669"/>
    <property type="project" value="UniProtKB-UniRule"/>
</dbReference>
<dbReference type="GO" id="GO:0042450">
    <property type="term" value="P:arginine biosynthetic process via ornithine"/>
    <property type="evidence" value="ECO:0007669"/>
    <property type="project" value="UniProtKB-UniRule"/>
</dbReference>
<dbReference type="GO" id="GO:0006526">
    <property type="term" value="P:L-arginine biosynthetic process"/>
    <property type="evidence" value="ECO:0007669"/>
    <property type="project" value="UniProtKB-UniPathway"/>
</dbReference>
<dbReference type="CDD" id="cd04250">
    <property type="entry name" value="AAK_NAGK-C"/>
    <property type="match status" value="1"/>
</dbReference>
<dbReference type="FunFam" id="3.40.1160.10:FF:000004">
    <property type="entry name" value="Acetylglutamate kinase"/>
    <property type="match status" value="1"/>
</dbReference>
<dbReference type="Gene3D" id="3.40.1160.10">
    <property type="entry name" value="Acetylglutamate kinase-like"/>
    <property type="match status" value="1"/>
</dbReference>
<dbReference type="HAMAP" id="MF_00082">
    <property type="entry name" value="ArgB"/>
    <property type="match status" value="1"/>
</dbReference>
<dbReference type="InterPro" id="IPR036393">
    <property type="entry name" value="AceGlu_kinase-like_sf"/>
</dbReference>
<dbReference type="InterPro" id="IPR004662">
    <property type="entry name" value="AcgluKinase_fam"/>
</dbReference>
<dbReference type="InterPro" id="IPR037528">
    <property type="entry name" value="ArgB"/>
</dbReference>
<dbReference type="InterPro" id="IPR001048">
    <property type="entry name" value="Asp/Glu/Uridylate_kinase"/>
</dbReference>
<dbReference type="InterPro" id="IPR001057">
    <property type="entry name" value="Glu/AcGlu_kinase"/>
</dbReference>
<dbReference type="InterPro" id="IPR041727">
    <property type="entry name" value="NAGK-C"/>
</dbReference>
<dbReference type="NCBIfam" id="TIGR00761">
    <property type="entry name" value="argB"/>
    <property type="match status" value="1"/>
</dbReference>
<dbReference type="PANTHER" id="PTHR23342">
    <property type="entry name" value="N-ACETYLGLUTAMATE SYNTHASE"/>
    <property type="match status" value="1"/>
</dbReference>
<dbReference type="PANTHER" id="PTHR23342:SF0">
    <property type="entry name" value="N-ACETYLGLUTAMATE SYNTHASE, MITOCHONDRIAL"/>
    <property type="match status" value="1"/>
</dbReference>
<dbReference type="Pfam" id="PF00696">
    <property type="entry name" value="AA_kinase"/>
    <property type="match status" value="1"/>
</dbReference>
<dbReference type="PIRSF" id="PIRSF000728">
    <property type="entry name" value="NAGK"/>
    <property type="match status" value="1"/>
</dbReference>
<dbReference type="PRINTS" id="PR00474">
    <property type="entry name" value="GLU5KINASE"/>
</dbReference>
<dbReference type="SUPFAM" id="SSF53633">
    <property type="entry name" value="Carbamate kinase-like"/>
    <property type="match status" value="1"/>
</dbReference>
<evidence type="ECO:0000255" key="1">
    <source>
        <dbReference type="HAMAP-Rule" id="MF_00082"/>
    </source>
</evidence>
<sequence length="293" mass="30853">MTIETLSTQSKAQVLAEALRWLKQLHGRVVVIKYGGNAMTDDTLRQAFAADMAFLRNCGIHPVVVHGGGPQITAMLGKLGIEGDFKGGFRVTTPEVLDVARMVLFGQVGRELVNLINAHGPYAVGVTGEDAQLFTAVRRSVNVDGVATDIGLVGDVDHVNAAALMDLIAAHRIPVISTLAPDAEGVVHNINADTAAAAVAEALGAEKLLMLTDVEGLYTSWPDRDSLVREIDTAALEQLLPRLEAGMIPKVEGCLRAVTGGVPSAHVIDGRVEHCVLVELFTNAGTGTKVVSA</sequence>
<keyword id="KW-0028">Amino-acid biosynthesis</keyword>
<keyword id="KW-0055">Arginine biosynthesis</keyword>
<keyword id="KW-0067">ATP-binding</keyword>
<keyword id="KW-0963">Cytoplasm</keyword>
<keyword id="KW-0418">Kinase</keyword>
<keyword id="KW-0547">Nucleotide-binding</keyword>
<keyword id="KW-0808">Transferase</keyword>